<comment type="function">
    <text evidence="1">One of the primary rRNA binding proteins, it binds directly to 16S rRNA where it nucleates assembly of the body of the 30S subunit.</text>
</comment>
<comment type="function">
    <text evidence="1">With S5 and S12 plays an important role in translational accuracy.</text>
</comment>
<comment type="subunit">
    <text evidence="1">Part of the 30S ribosomal subunit. Contacts protein S5. The interaction surface between S4 and S5 is involved in control of translational fidelity.</text>
</comment>
<comment type="similarity">
    <text evidence="1">Belongs to the universal ribosomal protein uS4 family.</text>
</comment>
<protein>
    <recommendedName>
        <fullName evidence="1">Small ribosomal subunit protein uS4</fullName>
    </recommendedName>
    <alternativeName>
        <fullName evidence="2">30S ribosomal protein S4</fullName>
    </alternativeName>
</protein>
<organism>
    <name type="scientific">Thiobacillus denitrificans (strain ATCC 25259 / T1)</name>
    <dbReference type="NCBI Taxonomy" id="292415"/>
    <lineage>
        <taxon>Bacteria</taxon>
        <taxon>Pseudomonadati</taxon>
        <taxon>Pseudomonadota</taxon>
        <taxon>Betaproteobacteria</taxon>
        <taxon>Nitrosomonadales</taxon>
        <taxon>Thiobacillaceae</taxon>
        <taxon>Thiobacillus</taxon>
    </lineage>
</organism>
<dbReference type="EMBL" id="CP000116">
    <property type="protein sequence ID" value="AAZ96382.1"/>
    <property type="molecule type" value="Genomic_DNA"/>
</dbReference>
<dbReference type="RefSeq" id="WP_011310941.1">
    <property type="nucleotide sequence ID" value="NC_007404.1"/>
</dbReference>
<dbReference type="SMR" id="Q3SLM5"/>
<dbReference type="STRING" id="292415.Tbd_0429"/>
<dbReference type="KEGG" id="tbd:Tbd_0429"/>
<dbReference type="eggNOG" id="COG0522">
    <property type="taxonomic scope" value="Bacteria"/>
</dbReference>
<dbReference type="HOGENOM" id="CLU_092403_0_2_4"/>
<dbReference type="OrthoDB" id="9803672at2"/>
<dbReference type="Proteomes" id="UP000008291">
    <property type="component" value="Chromosome"/>
</dbReference>
<dbReference type="GO" id="GO:0015935">
    <property type="term" value="C:small ribosomal subunit"/>
    <property type="evidence" value="ECO:0007669"/>
    <property type="project" value="InterPro"/>
</dbReference>
<dbReference type="GO" id="GO:0019843">
    <property type="term" value="F:rRNA binding"/>
    <property type="evidence" value="ECO:0007669"/>
    <property type="project" value="UniProtKB-UniRule"/>
</dbReference>
<dbReference type="GO" id="GO:0003735">
    <property type="term" value="F:structural constituent of ribosome"/>
    <property type="evidence" value="ECO:0007669"/>
    <property type="project" value="InterPro"/>
</dbReference>
<dbReference type="GO" id="GO:0042274">
    <property type="term" value="P:ribosomal small subunit biogenesis"/>
    <property type="evidence" value="ECO:0007669"/>
    <property type="project" value="TreeGrafter"/>
</dbReference>
<dbReference type="GO" id="GO:0006412">
    <property type="term" value="P:translation"/>
    <property type="evidence" value="ECO:0007669"/>
    <property type="project" value="UniProtKB-UniRule"/>
</dbReference>
<dbReference type="CDD" id="cd00165">
    <property type="entry name" value="S4"/>
    <property type="match status" value="1"/>
</dbReference>
<dbReference type="FunFam" id="1.10.1050.10:FF:000001">
    <property type="entry name" value="30S ribosomal protein S4"/>
    <property type="match status" value="1"/>
</dbReference>
<dbReference type="FunFam" id="3.10.290.10:FF:000001">
    <property type="entry name" value="30S ribosomal protein S4"/>
    <property type="match status" value="1"/>
</dbReference>
<dbReference type="Gene3D" id="1.10.1050.10">
    <property type="entry name" value="Ribosomal Protein S4 Delta 41, Chain A, domain 1"/>
    <property type="match status" value="1"/>
</dbReference>
<dbReference type="Gene3D" id="3.10.290.10">
    <property type="entry name" value="RNA-binding S4 domain"/>
    <property type="match status" value="1"/>
</dbReference>
<dbReference type="HAMAP" id="MF_01306_B">
    <property type="entry name" value="Ribosomal_uS4_B"/>
    <property type="match status" value="1"/>
</dbReference>
<dbReference type="InterPro" id="IPR022801">
    <property type="entry name" value="Ribosomal_uS4"/>
</dbReference>
<dbReference type="InterPro" id="IPR005709">
    <property type="entry name" value="Ribosomal_uS4_bac-type"/>
</dbReference>
<dbReference type="InterPro" id="IPR018079">
    <property type="entry name" value="Ribosomal_uS4_CS"/>
</dbReference>
<dbReference type="InterPro" id="IPR001912">
    <property type="entry name" value="Ribosomal_uS4_N"/>
</dbReference>
<dbReference type="InterPro" id="IPR002942">
    <property type="entry name" value="S4_RNA-bd"/>
</dbReference>
<dbReference type="InterPro" id="IPR036986">
    <property type="entry name" value="S4_RNA-bd_sf"/>
</dbReference>
<dbReference type="NCBIfam" id="NF003717">
    <property type="entry name" value="PRK05327.1"/>
    <property type="match status" value="1"/>
</dbReference>
<dbReference type="NCBIfam" id="TIGR01017">
    <property type="entry name" value="rpsD_bact"/>
    <property type="match status" value="1"/>
</dbReference>
<dbReference type="PANTHER" id="PTHR11831">
    <property type="entry name" value="30S 40S RIBOSOMAL PROTEIN"/>
    <property type="match status" value="1"/>
</dbReference>
<dbReference type="PANTHER" id="PTHR11831:SF4">
    <property type="entry name" value="SMALL RIBOSOMAL SUBUNIT PROTEIN US4M"/>
    <property type="match status" value="1"/>
</dbReference>
<dbReference type="Pfam" id="PF00163">
    <property type="entry name" value="Ribosomal_S4"/>
    <property type="match status" value="1"/>
</dbReference>
<dbReference type="Pfam" id="PF01479">
    <property type="entry name" value="S4"/>
    <property type="match status" value="1"/>
</dbReference>
<dbReference type="SMART" id="SM01390">
    <property type="entry name" value="Ribosomal_S4"/>
    <property type="match status" value="1"/>
</dbReference>
<dbReference type="SMART" id="SM00363">
    <property type="entry name" value="S4"/>
    <property type="match status" value="1"/>
</dbReference>
<dbReference type="SUPFAM" id="SSF55174">
    <property type="entry name" value="Alpha-L RNA-binding motif"/>
    <property type="match status" value="1"/>
</dbReference>
<dbReference type="PROSITE" id="PS00632">
    <property type="entry name" value="RIBOSOMAL_S4"/>
    <property type="match status" value="1"/>
</dbReference>
<dbReference type="PROSITE" id="PS50889">
    <property type="entry name" value="S4"/>
    <property type="match status" value="1"/>
</dbReference>
<feature type="chain" id="PRO_0000228935" description="Small ribosomal subunit protein uS4">
    <location>
        <begin position="1"/>
        <end position="209"/>
    </location>
</feature>
<feature type="domain" description="S4 RNA-binding" evidence="1">
    <location>
        <begin position="99"/>
        <end position="159"/>
    </location>
</feature>
<reference key="1">
    <citation type="journal article" date="2006" name="J. Bacteriol.">
        <title>The genome sequence of the obligately chemolithoautotrophic, facultatively anaerobic bacterium Thiobacillus denitrificans.</title>
        <authorList>
            <person name="Beller H.R."/>
            <person name="Chain P.S."/>
            <person name="Letain T.E."/>
            <person name="Chakicherla A."/>
            <person name="Larimer F.W."/>
            <person name="Richardson P.M."/>
            <person name="Coleman M.A."/>
            <person name="Wood A.P."/>
            <person name="Kelly D.P."/>
        </authorList>
    </citation>
    <scope>NUCLEOTIDE SEQUENCE [LARGE SCALE GENOMIC DNA]</scope>
    <source>
        <strain>ATCC 25259 / T1</strain>
    </source>
</reference>
<accession>Q3SLM5</accession>
<keyword id="KW-1185">Reference proteome</keyword>
<keyword id="KW-0687">Ribonucleoprotein</keyword>
<keyword id="KW-0689">Ribosomal protein</keyword>
<keyword id="KW-0694">RNA-binding</keyword>
<keyword id="KW-0699">rRNA-binding</keyword>
<name>RS4_THIDA</name>
<proteinExistence type="inferred from homology"/>
<evidence type="ECO:0000255" key="1">
    <source>
        <dbReference type="HAMAP-Rule" id="MF_01306"/>
    </source>
</evidence>
<evidence type="ECO:0000305" key="2"/>
<sequence length="209" mass="23590">MARNLDPKCRQCRREGEKLFLKGEKCFTDKCAIERRAYAPGQHGQKSGARLSGYGVQLREKQKIRRIYGVLEGQFRLTYKRADSRKGVTGENLLSMLESRLDSVCYRMGFGASRTEARQIVRHNGIVVNGRRVNIPSYQVRPGDVVEVAEKSKAQLRIKAAADATATRGYPEWIEVDAKALKGTYKAHPQRSELPSTINESLVVELYSK</sequence>
<gene>
    <name evidence="1" type="primary">rpsD</name>
    <name type="ordered locus">Tbd_0429</name>
</gene>